<proteinExistence type="inferred from homology"/>
<sequence length="702" mass="77380">MARKTPIERYRNIGISAHIDAGKTTTTERVLFYTGVNHKLGEVHDGAATMDWMEQEQERGITITSAATTCFWKGMAGNFPAHHINIIDTPGHVDFTIEVERSMRVLDGACMVYCAVGGVQPQSETVWRQANKYKVPRLAFVNKMDRTGANFFKVYDQMRARLKANPVPMQVPIGAEDSFEGVIDLVKMKAIIWDDASQGMKFEYGDIPEHLLADAKKWRENMVEAAAEASEELMNKYLEEGDLSEADIKAAIRQRTIASEIVPMMCGTAFKNKGVQAMLDGVVEYLPSPVDIPPVPGLNEDDEPVVRKAEDTEKFSALAFKIATDPFVGQLCFIRCYSGTLNSGDTVFNSVKEKKERIGRIVQMHANQREEIKEMLAGDIAAIVGLKDTTTGDTLCDDKAIVVLERMIFPEPVISQAVEPKTKADQEKMGLALNRLAAEDPSFRVRTDEESGQTIIAGMGELHLDIIVDRMKREFGVEATVGKPQVAYRETIRKVCEEIEGKFVKQSGGRGQYGHVVLKIEPQEPGKGFEFIDAIKGGTVPREYIPAVEKGVRETLTSGVLAGYPVVDVKVTLFFGSYHDVDSNENAFRMAASMAFKDGCRKASPVILEPMMAVEVETPEDYAGTVMGDLSSRRGMVQGMDEIAGGGGKIIKAEVPLSEMFGYSTSLRSATQGRATYSMEFKHYSEAPKNVIDAIVTSKAPK</sequence>
<comment type="function">
    <text evidence="1">Catalyzes the GTP-dependent ribosomal translocation step during translation elongation. During this step, the ribosome changes from the pre-translocational (PRE) to the post-translocational (POST) state as the newly formed A-site-bound peptidyl-tRNA and P-site-bound deacylated tRNA move to the P and E sites, respectively. Catalyzes the coordinated movement of the two tRNA molecules, the mRNA and conformational changes in the ribosome.</text>
</comment>
<comment type="subcellular location">
    <subcellularLocation>
        <location evidence="1">Cytoplasm</location>
    </subcellularLocation>
</comment>
<comment type="similarity">
    <text evidence="1">Belongs to the TRAFAC class translation factor GTPase superfamily. Classic translation factor GTPase family. EF-G/EF-2 subfamily.</text>
</comment>
<feature type="chain" id="PRO_1000008834" description="Elongation factor G">
    <location>
        <begin position="1"/>
        <end position="702"/>
    </location>
</feature>
<feature type="domain" description="tr-type G">
    <location>
        <begin position="8"/>
        <end position="290"/>
    </location>
</feature>
<feature type="binding site" evidence="1">
    <location>
        <begin position="17"/>
        <end position="24"/>
    </location>
    <ligand>
        <name>GTP</name>
        <dbReference type="ChEBI" id="CHEBI:37565"/>
    </ligand>
</feature>
<feature type="binding site" evidence="1">
    <location>
        <begin position="88"/>
        <end position="92"/>
    </location>
    <ligand>
        <name>GTP</name>
        <dbReference type="ChEBI" id="CHEBI:37565"/>
    </ligand>
</feature>
<feature type="binding site" evidence="1">
    <location>
        <begin position="142"/>
        <end position="145"/>
    </location>
    <ligand>
        <name>GTP</name>
        <dbReference type="ChEBI" id="CHEBI:37565"/>
    </ligand>
</feature>
<protein>
    <recommendedName>
        <fullName evidence="1">Elongation factor G</fullName>
        <shortName evidence="1">EF-G</shortName>
    </recommendedName>
</protein>
<reference key="1">
    <citation type="journal article" date="2007" name="PLoS Genet.">
        <title>Genome analysis of Minibacterium massiliensis highlights the convergent evolution of water-living bacteria.</title>
        <authorList>
            <person name="Audic S."/>
            <person name="Robert C."/>
            <person name="Campagna B."/>
            <person name="Parinello H."/>
            <person name="Claverie J.-M."/>
            <person name="Raoult D."/>
            <person name="Drancourt M."/>
        </authorList>
    </citation>
    <scope>NUCLEOTIDE SEQUENCE [LARGE SCALE GENOMIC DNA]</scope>
    <source>
        <strain>Marseille</strain>
    </source>
</reference>
<accession>A6T3K7</accession>
<keyword id="KW-0963">Cytoplasm</keyword>
<keyword id="KW-0251">Elongation factor</keyword>
<keyword id="KW-0342">GTP-binding</keyword>
<keyword id="KW-0547">Nucleotide-binding</keyword>
<keyword id="KW-0648">Protein biosynthesis</keyword>
<organism>
    <name type="scientific">Janthinobacterium sp. (strain Marseille)</name>
    <name type="common">Minibacterium massiliensis</name>
    <dbReference type="NCBI Taxonomy" id="375286"/>
    <lineage>
        <taxon>Bacteria</taxon>
        <taxon>Pseudomonadati</taxon>
        <taxon>Pseudomonadota</taxon>
        <taxon>Betaproteobacteria</taxon>
        <taxon>Burkholderiales</taxon>
        <taxon>Oxalobacteraceae</taxon>
        <taxon>Janthinobacterium</taxon>
    </lineage>
</organism>
<evidence type="ECO:0000255" key="1">
    <source>
        <dbReference type="HAMAP-Rule" id="MF_00054"/>
    </source>
</evidence>
<name>EFG_JANMA</name>
<gene>
    <name evidence="1" type="primary">fusA</name>
    <name type="ordered locus">mma_3414</name>
</gene>
<dbReference type="EMBL" id="CP000269">
    <property type="protein sequence ID" value="ABR88682.1"/>
    <property type="molecule type" value="Genomic_DNA"/>
</dbReference>
<dbReference type="RefSeq" id="WP_012081252.1">
    <property type="nucleotide sequence ID" value="NC_009659.1"/>
</dbReference>
<dbReference type="SMR" id="A6T3K7"/>
<dbReference type="STRING" id="375286.mma_3414"/>
<dbReference type="KEGG" id="mms:mma_3414"/>
<dbReference type="eggNOG" id="COG0480">
    <property type="taxonomic scope" value="Bacteria"/>
</dbReference>
<dbReference type="HOGENOM" id="CLU_002794_4_1_4"/>
<dbReference type="OrthoDB" id="9804431at2"/>
<dbReference type="Proteomes" id="UP000006388">
    <property type="component" value="Chromosome"/>
</dbReference>
<dbReference type="GO" id="GO:0005737">
    <property type="term" value="C:cytoplasm"/>
    <property type="evidence" value="ECO:0007669"/>
    <property type="project" value="UniProtKB-SubCell"/>
</dbReference>
<dbReference type="GO" id="GO:0005525">
    <property type="term" value="F:GTP binding"/>
    <property type="evidence" value="ECO:0007669"/>
    <property type="project" value="UniProtKB-UniRule"/>
</dbReference>
<dbReference type="GO" id="GO:0003924">
    <property type="term" value="F:GTPase activity"/>
    <property type="evidence" value="ECO:0007669"/>
    <property type="project" value="InterPro"/>
</dbReference>
<dbReference type="GO" id="GO:0097216">
    <property type="term" value="F:guanosine tetraphosphate binding"/>
    <property type="evidence" value="ECO:0007669"/>
    <property type="project" value="UniProtKB-ARBA"/>
</dbReference>
<dbReference type="GO" id="GO:0003746">
    <property type="term" value="F:translation elongation factor activity"/>
    <property type="evidence" value="ECO:0007669"/>
    <property type="project" value="UniProtKB-UniRule"/>
</dbReference>
<dbReference type="GO" id="GO:0032790">
    <property type="term" value="P:ribosome disassembly"/>
    <property type="evidence" value="ECO:0007669"/>
    <property type="project" value="TreeGrafter"/>
</dbReference>
<dbReference type="CDD" id="cd01886">
    <property type="entry name" value="EF-G"/>
    <property type="match status" value="1"/>
</dbReference>
<dbReference type="CDD" id="cd16262">
    <property type="entry name" value="EFG_III"/>
    <property type="match status" value="1"/>
</dbReference>
<dbReference type="CDD" id="cd01434">
    <property type="entry name" value="EFG_mtEFG1_IV"/>
    <property type="match status" value="1"/>
</dbReference>
<dbReference type="CDD" id="cd03713">
    <property type="entry name" value="EFG_mtEFG_C"/>
    <property type="match status" value="1"/>
</dbReference>
<dbReference type="CDD" id="cd04088">
    <property type="entry name" value="EFG_mtEFG_II"/>
    <property type="match status" value="1"/>
</dbReference>
<dbReference type="FunFam" id="2.40.30.10:FF:000006">
    <property type="entry name" value="Elongation factor G"/>
    <property type="match status" value="1"/>
</dbReference>
<dbReference type="FunFam" id="3.30.230.10:FF:000003">
    <property type="entry name" value="Elongation factor G"/>
    <property type="match status" value="1"/>
</dbReference>
<dbReference type="FunFam" id="3.30.70.240:FF:000001">
    <property type="entry name" value="Elongation factor G"/>
    <property type="match status" value="1"/>
</dbReference>
<dbReference type="FunFam" id="3.30.70.870:FF:000001">
    <property type="entry name" value="Elongation factor G"/>
    <property type="match status" value="1"/>
</dbReference>
<dbReference type="FunFam" id="3.40.50.300:FF:000029">
    <property type="entry name" value="Elongation factor G"/>
    <property type="match status" value="1"/>
</dbReference>
<dbReference type="Gene3D" id="3.30.230.10">
    <property type="match status" value="1"/>
</dbReference>
<dbReference type="Gene3D" id="3.30.70.240">
    <property type="match status" value="1"/>
</dbReference>
<dbReference type="Gene3D" id="3.30.70.870">
    <property type="entry name" value="Elongation Factor G (Translational Gtpase), domain 3"/>
    <property type="match status" value="1"/>
</dbReference>
<dbReference type="Gene3D" id="3.40.50.300">
    <property type="entry name" value="P-loop containing nucleotide triphosphate hydrolases"/>
    <property type="match status" value="1"/>
</dbReference>
<dbReference type="Gene3D" id="2.40.30.10">
    <property type="entry name" value="Translation factors"/>
    <property type="match status" value="1"/>
</dbReference>
<dbReference type="HAMAP" id="MF_00054_B">
    <property type="entry name" value="EF_G_EF_2_B"/>
    <property type="match status" value="1"/>
</dbReference>
<dbReference type="InterPro" id="IPR041095">
    <property type="entry name" value="EFG_II"/>
</dbReference>
<dbReference type="InterPro" id="IPR009022">
    <property type="entry name" value="EFG_III"/>
</dbReference>
<dbReference type="InterPro" id="IPR035647">
    <property type="entry name" value="EFG_III/V"/>
</dbReference>
<dbReference type="InterPro" id="IPR047872">
    <property type="entry name" value="EFG_IV"/>
</dbReference>
<dbReference type="InterPro" id="IPR035649">
    <property type="entry name" value="EFG_V"/>
</dbReference>
<dbReference type="InterPro" id="IPR000640">
    <property type="entry name" value="EFG_V-like"/>
</dbReference>
<dbReference type="InterPro" id="IPR004161">
    <property type="entry name" value="EFTu-like_2"/>
</dbReference>
<dbReference type="InterPro" id="IPR031157">
    <property type="entry name" value="G_TR_CS"/>
</dbReference>
<dbReference type="InterPro" id="IPR027417">
    <property type="entry name" value="P-loop_NTPase"/>
</dbReference>
<dbReference type="InterPro" id="IPR020568">
    <property type="entry name" value="Ribosomal_Su5_D2-typ_SF"/>
</dbReference>
<dbReference type="InterPro" id="IPR014721">
    <property type="entry name" value="Ribsml_uS5_D2-typ_fold_subgr"/>
</dbReference>
<dbReference type="InterPro" id="IPR005225">
    <property type="entry name" value="Small_GTP-bd"/>
</dbReference>
<dbReference type="InterPro" id="IPR000795">
    <property type="entry name" value="T_Tr_GTP-bd_dom"/>
</dbReference>
<dbReference type="InterPro" id="IPR009000">
    <property type="entry name" value="Transl_B-barrel_sf"/>
</dbReference>
<dbReference type="InterPro" id="IPR004540">
    <property type="entry name" value="Transl_elong_EFG/EF2"/>
</dbReference>
<dbReference type="InterPro" id="IPR005517">
    <property type="entry name" value="Transl_elong_EFG/EF2_IV"/>
</dbReference>
<dbReference type="NCBIfam" id="TIGR00484">
    <property type="entry name" value="EF-G"/>
    <property type="match status" value="1"/>
</dbReference>
<dbReference type="NCBIfam" id="NF009381">
    <property type="entry name" value="PRK12740.1-5"/>
    <property type="match status" value="1"/>
</dbReference>
<dbReference type="NCBIfam" id="TIGR00231">
    <property type="entry name" value="small_GTP"/>
    <property type="match status" value="1"/>
</dbReference>
<dbReference type="PANTHER" id="PTHR43261:SF1">
    <property type="entry name" value="RIBOSOME-RELEASING FACTOR 2, MITOCHONDRIAL"/>
    <property type="match status" value="1"/>
</dbReference>
<dbReference type="PANTHER" id="PTHR43261">
    <property type="entry name" value="TRANSLATION ELONGATION FACTOR G-RELATED"/>
    <property type="match status" value="1"/>
</dbReference>
<dbReference type="Pfam" id="PF00679">
    <property type="entry name" value="EFG_C"/>
    <property type="match status" value="1"/>
</dbReference>
<dbReference type="Pfam" id="PF14492">
    <property type="entry name" value="EFG_III"/>
    <property type="match status" value="1"/>
</dbReference>
<dbReference type="Pfam" id="PF03764">
    <property type="entry name" value="EFG_IV"/>
    <property type="match status" value="1"/>
</dbReference>
<dbReference type="Pfam" id="PF00009">
    <property type="entry name" value="GTP_EFTU"/>
    <property type="match status" value="1"/>
</dbReference>
<dbReference type="Pfam" id="PF03144">
    <property type="entry name" value="GTP_EFTU_D2"/>
    <property type="match status" value="1"/>
</dbReference>
<dbReference type="PRINTS" id="PR00315">
    <property type="entry name" value="ELONGATNFCT"/>
</dbReference>
<dbReference type="SMART" id="SM00838">
    <property type="entry name" value="EFG_C"/>
    <property type="match status" value="1"/>
</dbReference>
<dbReference type="SMART" id="SM00889">
    <property type="entry name" value="EFG_IV"/>
    <property type="match status" value="1"/>
</dbReference>
<dbReference type="SUPFAM" id="SSF54980">
    <property type="entry name" value="EF-G C-terminal domain-like"/>
    <property type="match status" value="2"/>
</dbReference>
<dbReference type="SUPFAM" id="SSF52540">
    <property type="entry name" value="P-loop containing nucleoside triphosphate hydrolases"/>
    <property type="match status" value="1"/>
</dbReference>
<dbReference type="SUPFAM" id="SSF54211">
    <property type="entry name" value="Ribosomal protein S5 domain 2-like"/>
    <property type="match status" value="1"/>
</dbReference>
<dbReference type="SUPFAM" id="SSF50447">
    <property type="entry name" value="Translation proteins"/>
    <property type="match status" value="1"/>
</dbReference>
<dbReference type="PROSITE" id="PS00301">
    <property type="entry name" value="G_TR_1"/>
    <property type="match status" value="1"/>
</dbReference>
<dbReference type="PROSITE" id="PS51722">
    <property type="entry name" value="G_TR_2"/>
    <property type="match status" value="1"/>
</dbReference>